<gene>
    <name type="primary">DRIP1</name>
    <name type="ordered locus">At1g06770</name>
    <name type="ORF">F4H5.14</name>
</gene>
<accession>Q9M9Y4</accession>
<accession>Q3EDH5</accession>
<name>DRIP1_ARATH</name>
<proteinExistence type="evidence at protein level"/>
<reference key="1">
    <citation type="journal article" date="2000" name="Nature">
        <title>Sequence and analysis of chromosome 1 of the plant Arabidopsis thaliana.</title>
        <authorList>
            <person name="Theologis A."/>
            <person name="Ecker J.R."/>
            <person name="Palm C.J."/>
            <person name="Federspiel N.A."/>
            <person name="Kaul S."/>
            <person name="White O."/>
            <person name="Alonso J."/>
            <person name="Altafi H."/>
            <person name="Araujo R."/>
            <person name="Bowman C.L."/>
            <person name="Brooks S.Y."/>
            <person name="Buehler E."/>
            <person name="Chan A."/>
            <person name="Chao Q."/>
            <person name="Chen H."/>
            <person name="Cheuk R.F."/>
            <person name="Chin C.W."/>
            <person name="Chung M.K."/>
            <person name="Conn L."/>
            <person name="Conway A.B."/>
            <person name="Conway A.R."/>
            <person name="Creasy T.H."/>
            <person name="Dewar K."/>
            <person name="Dunn P."/>
            <person name="Etgu P."/>
            <person name="Feldblyum T.V."/>
            <person name="Feng J.-D."/>
            <person name="Fong B."/>
            <person name="Fujii C.Y."/>
            <person name="Gill J.E."/>
            <person name="Goldsmith A.D."/>
            <person name="Haas B."/>
            <person name="Hansen N.F."/>
            <person name="Hughes B."/>
            <person name="Huizar L."/>
            <person name="Hunter J.L."/>
            <person name="Jenkins J."/>
            <person name="Johnson-Hopson C."/>
            <person name="Khan S."/>
            <person name="Khaykin E."/>
            <person name="Kim C.J."/>
            <person name="Koo H.L."/>
            <person name="Kremenetskaia I."/>
            <person name="Kurtz D.B."/>
            <person name="Kwan A."/>
            <person name="Lam B."/>
            <person name="Langin-Hooper S."/>
            <person name="Lee A."/>
            <person name="Lee J.M."/>
            <person name="Lenz C.A."/>
            <person name="Li J.H."/>
            <person name="Li Y.-P."/>
            <person name="Lin X."/>
            <person name="Liu S.X."/>
            <person name="Liu Z.A."/>
            <person name="Luros J.S."/>
            <person name="Maiti R."/>
            <person name="Marziali A."/>
            <person name="Militscher J."/>
            <person name="Miranda M."/>
            <person name="Nguyen M."/>
            <person name="Nierman W.C."/>
            <person name="Osborne B.I."/>
            <person name="Pai G."/>
            <person name="Peterson J."/>
            <person name="Pham P.K."/>
            <person name="Rizzo M."/>
            <person name="Rooney T."/>
            <person name="Rowley D."/>
            <person name="Sakano H."/>
            <person name="Salzberg S.L."/>
            <person name="Schwartz J.R."/>
            <person name="Shinn P."/>
            <person name="Southwick A.M."/>
            <person name="Sun H."/>
            <person name="Tallon L.J."/>
            <person name="Tambunga G."/>
            <person name="Toriumi M.J."/>
            <person name="Town C.D."/>
            <person name="Utterback T."/>
            <person name="Van Aken S."/>
            <person name="Vaysberg M."/>
            <person name="Vysotskaia V.S."/>
            <person name="Walker M."/>
            <person name="Wu D."/>
            <person name="Yu G."/>
            <person name="Fraser C.M."/>
            <person name="Venter J.C."/>
            <person name="Davis R.W."/>
        </authorList>
    </citation>
    <scope>NUCLEOTIDE SEQUENCE [LARGE SCALE GENOMIC DNA]</scope>
    <source>
        <strain>cv. Columbia</strain>
    </source>
</reference>
<reference key="2">
    <citation type="journal article" date="2017" name="Plant J.">
        <title>Araport11: a complete reannotation of the Arabidopsis thaliana reference genome.</title>
        <authorList>
            <person name="Cheng C.Y."/>
            <person name="Krishnakumar V."/>
            <person name="Chan A.P."/>
            <person name="Thibaud-Nissen F."/>
            <person name="Schobel S."/>
            <person name="Town C.D."/>
        </authorList>
    </citation>
    <scope>GENOME REANNOTATION</scope>
    <source>
        <strain>cv. Columbia</strain>
    </source>
</reference>
<reference key="3">
    <citation type="journal article" date="2004" name="Genome Res.">
        <title>Whole genome sequence comparisons and 'full-length' cDNA sequences: a combined approach to evaluate and improve Arabidopsis genome annotation.</title>
        <authorList>
            <person name="Castelli V."/>
            <person name="Aury J.-M."/>
            <person name="Jaillon O."/>
            <person name="Wincker P."/>
            <person name="Clepet C."/>
            <person name="Menard M."/>
            <person name="Cruaud C."/>
            <person name="Quetier F."/>
            <person name="Scarpelli C."/>
            <person name="Schaechter V."/>
            <person name="Temple G."/>
            <person name="Caboche M."/>
            <person name="Weissenbach J."/>
            <person name="Salanoubat M."/>
        </authorList>
    </citation>
    <scope>NUCLEOTIDE SEQUENCE [LARGE SCALE MRNA]</scope>
    <source>
        <strain>cv. Columbia</strain>
    </source>
</reference>
<reference key="4">
    <citation type="submission" date="2008-07" db="EMBL/GenBank/DDBJ databases">
        <title>Arabidopsis ORF clones.</title>
        <authorList>
            <person name="De Los Reyes C."/>
            <person name="Quan R."/>
            <person name="Chen H."/>
            <person name="Bautista V.R."/>
            <person name="Kim C.J."/>
            <person name="Ecker J.R."/>
        </authorList>
    </citation>
    <scope>NUCLEOTIDE SEQUENCE [LARGE SCALE MRNA] OF 115-421</scope>
    <source>
        <strain>cv. Columbia</strain>
    </source>
</reference>
<reference key="5">
    <citation type="journal article" date="2008" name="Plant Cell">
        <title>Arabidopsis DREB2A-interacting proteins function as RING E3 ligases and negatively regulate plant drought stress-responsive gene expression.</title>
        <authorList>
            <person name="Qin F."/>
            <person name="Sakuma Y."/>
            <person name="Tran L.-S.H."/>
            <person name="Maruyama K."/>
            <person name="Kidokoro S."/>
            <person name="Fujita Y."/>
            <person name="Fujita M."/>
            <person name="Umezawa T."/>
            <person name="Sawano Y."/>
            <person name="Miyazono K."/>
            <person name="Tanokura M."/>
            <person name="Shinozaki K."/>
            <person name="Yamaguchi-Shinozaki K."/>
        </authorList>
    </citation>
    <scope>FUNCTION</scope>
    <scope>CATALYTIC ACTIVITY</scope>
    <scope>INTERACTION WITH DREB2A</scope>
    <scope>SUBCELLULAR LOCATION</scope>
    <scope>TISSUE SPECIFICITY</scope>
    <scope>AUTOUBIQUITINATION</scope>
    <scope>DISRUPTION PHENOTYPE</scope>
</reference>
<comment type="function">
    <text evidence="3">E3 ubiquitin-protein ligase that acts as a negative regulator of the response to water stress. Mediates ubiquitination and subsequent proteasomal degradation of the drought-induced transcriptional activator DREB2A. Functionally redundant with DRIP2.</text>
</comment>
<comment type="catalytic activity">
    <reaction evidence="3">
        <text>S-ubiquitinyl-[E2 ubiquitin-conjugating enzyme]-L-cysteine + [acceptor protein]-L-lysine = [E2 ubiquitin-conjugating enzyme]-L-cysteine + N(6)-ubiquitinyl-[acceptor protein]-L-lysine.</text>
        <dbReference type="EC" id="2.3.2.27"/>
    </reaction>
</comment>
<comment type="pathway">
    <text>Protein modification; protein ubiquitination.</text>
</comment>
<comment type="subunit">
    <text evidence="3">Interacts with DREB2A.</text>
</comment>
<comment type="interaction">
    <interactant intactId="EBI-1786858">
        <id>Q9M9Y4</id>
    </interactant>
    <interactant intactId="EBI-1786840">
        <id>O82132</id>
        <label>DREB2A</label>
    </interactant>
    <organismsDiffer>false</organismsDiffer>
    <experiments>4</experiments>
</comment>
<comment type="subcellular location">
    <subcellularLocation>
        <location evidence="3">Nucleus</location>
    </subcellularLocation>
</comment>
<comment type="alternative products">
    <event type="alternative splicing"/>
    <isoform>
        <id>Q9M9Y4-1</id>
        <name>1</name>
        <sequence type="displayed"/>
    </isoform>
    <isoform>
        <id>Q9M9Y4-2</id>
        <name>2</name>
        <sequence type="described" ref="VSP_039633"/>
    </isoform>
</comment>
<comment type="tissue specificity">
    <text evidence="3">Expressed in roots, leaves and flowers.</text>
</comment>
<comment type="PTM">
    <text evidence="3">Autoubiquitinated.</text>
</comment>
<comment type="disruption phenotype">
    <text evidence="3">No visible phenotype. Drip1 and drip2 double mutant shows delayed growth and development, but increased tolerance to drought stress, compared to wild-type.</text>
</comment>
<comment type="sequence caution" evidence="4">
    <conflict type="erroneous gene model prediction">
        <sequence resource="EMBL-CDS" id="AAF63142"/>
    </conflict>
</comment>
<comment type="sequence caution" evidence="4">
    <conflict type="miscellaneous discrepancy">
        <sequence resource="EMBL" id="BX815334"/>
    </conflict>
    <text>Sequencing errors.</text>
</comment>
<keyword id="KW-0002">3D-structure</keyword>
<keyword id="KW-0025">Alternative splicing</keyword>
<keyword id="KW-0479">Metal-binding</keyword>
<keyword id="KW-0539">Nucleus</keyword>
<keyword id="KW-1185">Reference proteome</keyword>
<keyword id="KW-0808">Transferase</keyword>
<keyword id="KW-0832">Ubl conjugation</keyword>
<keyword id="KW-0833">Ubl conjugation pathway</keyword>
<keyword id="KW-0862">Zinc</keyword>
<keyword id="KW-0863">Zinc-finger</keyword>
<feature type="chain" id="PRO_0000397042" description="E3 ubiquitin protein ligase DRIP1">
    <location>
        <begin position="1"/>
        <end position="421"/>
    </location>
</feature>
<feature type="zinc finger region" description="RING-type" evidence="1">
    <location>
        <begin position="16"/>
        <end position="57"/>
    </location>
</feature>
<feature type="region of interest" description="Disordered" evidence="2">
    <location>
        <begin position="106"/>
        <end position="198"/>
    </location>
</feature>
<feature type="region of interest" description="Disordered" evidence="2">
    <location>
        <begin position="216"/>
        <end position="307"/>
    </location>
</feature>
<feature type="compositionally biased region" description="Polar residues" evidence="2">
    <location>
        <begin position="106"/>
        <end position="121"/>
    </location>
</feature>
<feature type="compositionally biased region" description="Polar residues" evidence="2">
    <location>
        <begin position="157"/>
        <end position="172"/>
    </location>
</feature>
<feature type="compositionally biased region" description="Basic and acidic residues" evidence="2">
    <location>
        <begin position="178"/>
        <end position="198"/>
    </location>
</feature>
<feature type="compositionally biased region" description="Low complexity" evidence="2">
    <location>
        <begin position="218"/>
        <end position="227"/>
    </location>
</feature>
<feature type="compositionally biased region" description="Basic residues" evidence="2">
    <location>
        <begin position="244"/>
        <end position="253"/>
    </location>
</feature>
<feature type="compositionally biased region" description="Polar residues" evidence="2">
    <location>
        <begin position="262"/>
        <end position="271"/>
    </location>
</feature>
<feature type="compositionally biased region" description="Basic residues" evidence="2">
    <location>
        <begin position="274"/>
        <end position="284"/>
    </location>
</feature>
<feature type="compositionally biased region" description="Polar residues" evidence="2">
    <location>
        <begin position="285"/>
        <end position="294"/>
    </location>
</feature>
<feature type="splice variant" id="VSP_039633" description="In isoform 2." evidence="4">
    <location>
        <begin position="1"/>
        <end position="114"/>
    </location>
</feature>
<protein>
    <recommendedName>
        <fullName>E3 ubiquitin protein ligase DRIP1</fullName>
        <ecNumber evidence="3">2.3.2.27</ecNumber>
    </recommendedName>
    <alternativeName>
        <fullName>DREB2A-interacting protein 1</fullName>
    </alternativeName>
    <alternativeName>
        <fullName evidence="4">RING-type E3 ubiquitin transferase DRIP1</fullName>
    </alternativeName>
</protein>
<dbReference type="EC" id="2.3.2.27" evidence="3"/>
<dbReference type="EMBL" id="AC011001">
    <property type="protein sequence ID" value="AAF63142.1"/>
    <property type="status" value="ALT_SEQ"/>
    <property type="molecule type" value="Genomic_DNA"/>
</dbReference>
<dbReference type="EMBL" id="CP002684">
    <property type="protein sequence ID" value="AEE28033.1"/>
    <property type="molecule type" value="Genomic_DNA"/>
</dbReference>
<dbReference type="EMBL" id="CP002684">
    <property type="protein sequence ID" value="AEE28034.1"/>
    <property type="molecule type" value="Genomic_DNA"/>
</dbReference>
<dbReference type="EMBL" id="BX815334">
    <property type="status" value="NOT_ANNOTATED_CDS"/>
    <property type="molecule type" value="mRNA"/>
</dbReference>
<dbReference type="EMBL" id="BT033132">
    <property type="protein sequence ID" value="ACF28393.1"/>
    <property type="molecule type" value="mRNA"/>
</dbReference>
<dbReference type="PIR" id="E86202">
    <property type="entry name" value="E86202"/>
</dbReference>
<dbReference type="RefSeq" id="NP_172162.3">
    <molecule id="Q9M9Y4-1"/>
    <property type="nucleotide sequence ID" value="NM_100554.5"/>
</dbReference>
<dbReference type="RefSeq" id="NP_973775.1">
    <molecule id="Q9M9Y4-2"/>
    <property type="nucleotide sequence ID" value="NM_202046.2"/>
</dbReference>
<dbReference type="PDB" id="5Y53">
    <property type="method" value="X-ray"/>
    <property type="resolution" value="1.60 A"/>
    <property type="chains" value="D/F=269-286"/>
</dbReference>
<dbReference type="PDBsum" id="5Y53"/>
<dbReference type="SMR" id="Q9M9Y4"/>
<dbReference type="BioGRID" id="22429">
    <property type="interactions" value="2"/>
</dbReference>
<dbReference type="FunCoup" id="Q9M9Y4">
    <property type="interactions" value="172"/>
</dbReference>
<dbReference type="IntAct" id="Q9M9Y4">
    <property type="interactions" value="1"/>
</dbReference>
<dbReference type="STRING" id="3702.Q9M9Y4"/>
<dbReference type="iPTMnet" id="Q9M9Y4"/>
<dbReference type="PaxDb" id="3702-AT1G06770.1"/>
<dbReference type="ProteomicsDB" id="224304">
    <molecule id="Q9M9Y4-1"/>
</dbReference>
<dbReference type="EnsemblPlants" id="AT1G06770.1">
    <molecule id="Q9M9Y4-1"/>
    <property type="protein sequence ID" value="AT1G06770.1"/>
    <property type="gene ID" value="AT1G06770"/>
</dbReference>
<dbReference type="EnsemblPlants" id="AT1G06770.2">
    <molecule id="Q9M9Y4-2"/>
    <property type="protein sequence ID" value="AT1G06770.2"/>
    <property type="gene ID" value="AT1G06770"/>
</dbReference>
<dbReference type="GeneID" id="837188"/>
<dbReference type="Gramene" id="AT1G06770.1">
    <molecule id="Q9M9Y4-1"/>
    <property type="protein sequence ID" value="AT1G06770.1"/>
    <property type="gene ID" value="AT1G06770"/>
</dbReference>
<dbReference type="Gramene" id="AT1G06770.2">
    <molecule id="Q9M9Y4-2"/>
    <property type="protein sequence ID" value="AT1G06770.2"/>
    <property type="gene ID" value="AT1G06770"/>
</dbReference>
<dbReference type="KEGG" id="ath:AT1G06770"/>
<dbReference type="Araport" id="AT1G06770"/>
<dbReference type="TAIR" id="AT1G06770">
    <property type="gene designation" value="DRIP1"/>
</dbReference>
<dbReference type="eggNOG" id="KOG2660">
    <property type="taxonomic scope" value="Eukaryota"/>
</dbReference>
<dbReference type="HOGENOM" id="CLU_039235_1_0_1"/>
<dbReference type="InParanoid" id="Q9M9Y4"/>
<dbReference type="OMA" id="NNWEDIR"/>
<dbReference type="OrthoDB" id="1305878at2759"/>
<dbReference type="PhylomeDB" id="Q9M9Y4"/>
<dbReference type="UniPathway" id="UPA00143"/>
<dbReference type="PRO" id="PR:Q9M9Y4"/>
<dbReference type="Proteomes" id="UP000006548">
    <property type="component" value="Chromosome 1"/>
</dbReference>
<dbReference type="ExpressionAtlas" id="Q9M9Y4">
    <property type="expression patterns" value="baseline and differential"/>
</dbReference>
<dbReference type="GO" id="GO:0005634">
    <property type="term" value="C:nucleus"/>
    <property type="evidence" value="ECO:0000314"/>
    <property type="project" value="TAIR"/>
</dbReference>
<dbReference type="GO" id="GO:0004842">
    <property type="term" value="F:ubiquitin-protein transferase activity"/>
    <property type="evidence" value="ECO:0000314"/>
    <property type="project" value="TAIR"/>
</dbReference>
<dbReference type="GO" id="GO:0008270">
    <property type="term" value="F:zinc ion binding"/>
    <property type="evidence" value="ECO:0007669"/>
    <property type="project" value="UniProtKB-KW"/>
</dbReference>
<dbReference type="GO" id="GO:0051865">
    <property type="term" value="P:protein autoubiquitination"/>
    <property type="evidence" value="ECO:0000314"/>
    <property type="project" value="UniProtKB"/>
</dbReference>
<dbReference type="GO" id="GO:0016567">
    <property type="term" value="P:protein ubiquitination"/>
    <property type="evidence" value="ECO:0000314"/>
    <property type="project" value="UniProtKB"/>
</dbReference>
<dbReference type="GO" id="GO:0009414">
    <property type="term" value="P:response to water deprivation"/>
    <property type="evidence" value="ECO:0000316"/>
    <property type="project" value="TAIR"/>
</dbReference>
<dbReference type="CDD" id="cd17087">
    <property type="entry name" value="RAWUL_DRIP_like"/>
    <property type="match status" value="1"/>
</dbReference>
<dbReference type="CDD" id="cd16525">
    <property type="entry name" value="RING-HC_PCGF"/>
    <property type="match status" value="1"/>
</dbReference>
<dbReference type="FunFam" id="3.30.40.10:FF:000033">
    <property type="entry name" value="Polycomb group RING finger protein 3"/>
    <property type="match status" value="1"/>
</dbReference>
<dbReference type="Gene3D" id="3.10.20.90">
    <property type="entry name" value="Phosphatidylinositol 3-kinase Catalytic Subunit, Chain A, domain 1"/>
    <property type="match status" value="1"/>
</dbReference>
<dbReference type="Gene3D" id="3.30.40.10">
    <property type="entry name" value="Zinc/RING finger domain, C3HC4 (zinc finger)"/>
    <property type="match status" value="1"/>
</dbReference>
<dbReference type="InterPro" id="IPR044768">
    <property type="entry name" value="DRIP-like_RAWUL"/>
</dbReference>
<dbReference type="InterPro" id="IPR044807">
    <property type="entry name" value="DRIP1-like"/>
</dbReference>
<dbReference type="InterPro" id="IPR001841">
    <property type="entry name" value="Znf_RING"/>
</dbReference>
<dbReference type="InterPro" id="IPR013083">
    <property type="entry name" value="Znf_RING/FYVE/PHD"/>
</dbReference>
<dbReference type="InterPro" id="IPR017907">
    <property type="entry name" value="Znf_RING_CS"/>
</dbReference>
<dbReference type="PANTHER" id="PTHR46293">
    <property type="entry name" value="E3 UBIQUITIN PROTEIN LIGASE DRIP1"/>
    <property type="match status" value="1"/>
</dbReference>
<dbReference type="PANTHER" id="PTHR46293:SF16">
    <property type="entry name" value="E3 UBIQUITIN PROTEIN LIGASE DRIP1"/>
    <property type="match status" value="1"/>
</dbReference>
<dbReference type="Pfam" id="PF13923">
    <property type="entry name" value="zf-C3HC4_2"/>
    <property type="match status" value="1"/>
</dbReference>
<dbReference type="SMART" id="SM00184">
    <property type="entry name" value="RING"/>
    <property type="match status" value="1"/>
</dbReference>
<dbReference type="SUPFAM" id="SSF57850">
    <property type="entry name" value="RING/U-box"/>
    <property type="match status" value="1"/>
</dbReference>
<dbReference type="PROSITE" id="PS00518">
    <property type="entry name" value="ZF_RING_1"/>
    <property type="match status" value="1"/>
</dbReference>
<dbReference type="PROSITE" id="PS50089">
    <property type="entry name" value="ZF_RING_2"/>
    <property type="match status" value="1"/>
</dbReference>
<evidence type="ECO:0000255" key="1">
    <source>
        <dbReference type="PROSITE-ProRule" id="PRU00175"/>
    </source>
</evidence>
<evidence type="ECO:0000256" key="2">
    <source>
        <dbReference type="SAM" id="MobiDB-lite"/>
    </source>
</evidence>
<evidence type="ECO:0000269" key="3">
    <source>
    </source>
</evidence>
<evidence type="ECO:0000305" key="4"/>
<sequence length="421" mass="47328">MMIKVKKETMRACLSCSICDNILRDATTISECLHTFCRKCIYEKITEDEIETCPVCNIDLGSTPLEKLRPDHNLQDLRAKIFALKRRKVKAPGIVSLPGKRKERSISSLVVSTPMVSAQAGTTRRRTKAPTRKELRNGSLAERTVKKEESSGDELLESTSSPDTLNKFTQNKRQSKKSCKESISNKENKDGDEPWDSKMDWKPLNFLVEVANGTKPLKSSASQGSGSKSEHANVSRNQFQGSKTKTKNKKRKCKREDDKSNNGDPTTSETVTPKRMRTTQRKRSATTLGDSRNLPQPDESSAKQERRNGPVWFSLVASNDQEGGTSLPQIPANFLRIRDGNTTVSFIQKYLMRKLDLESENEIEIKCMGEAVIPTLTLYNLVDLWLQKSSNHQRFAALVGSSAKDFTMVLVYARKLPECNM</sequence>
<organism>
    <name type="scientific">Arabidopsis thaliana</name>
    <name type="common">Mouse-ear cress</name>
    <dbReference type="NCBI Taxonomy" id="3702"/>
    <lineage>
        <taxon>Eukaryota</taxon>
        <taxon>Viridiplantae</taxon>
        <taxon>Streptophyta</taxon>
        <taxon>Embryophyta</taxon>
        <taxon>Tracheophyta</taxon>
        <taxon>Spermatophyta</taxon>
        <taxon>Magnoliopsida</taxon>
        <taxon>eudicotyledons</taxon>
        <taxon>Gunneridae</taxon>
        <taxon>Pentapetalae</taxon>
        <taxon>rosids</taxon>
        <taxon>malvids</taxon>
        <taxon>Brassicales</taxon>
        <taxon>Brassicaceae</taxon>
        <taxon>Camelineae</taxon>
        <taxon>Arabidopsis</taxon>
    </lineage>
</organism>